<evidence type="ECO:0000255" key="1"/>
<evidence type="ECO:0000305" key="2"/>
<evidence type="ECO:0007744" key="3">
    <source>
    </source>
</evidence>
<evidence type="ECO:0007744" key="4">
    <source>
    </source>
</evidence>
<dbReference type="EMBL" id="AL162971">
    <property type="protein sequence ID" value="CAB85999.1"/>
    <property type="status" value="ALT_INIT"/>
    <property type="molecule type" value="Genomic_DNA"/>
</dbReference>
<dbReference type="EMBL" id="CP002688">
    <property type="protein sequence ID" value="AED90499.1"/>
    <property type="molecule type" value="Genomic_DNA"/>
</dbReference>
<dbReference type="EMBL" id="CP002688">
    <property type="protein sequence ID" value="ANM70363.1"/>
    <property type="molecule type" value="Genomic_DNA"/>
</dbReference>
<dbReference type="EMBL" id="CP002688">
    <property type="protein sequence ID" value="ANM70366.1"/>
    <property type="molecule type" value="Genomic_DNA"/>
</dbReference>
<dbReference type="EMBL" id="BT015133">
    <property type="protein sequence ID" value="AAT85729.1"/>
    <property type="molecule type" value="mRNA"/>
</dbReference>
<dbReference type="EMBL" id="BT020220">
    <property type="protein sequence ID" value="AAV59286.1"/>
    <property type="molecule type" value="mRNA"/>
</dbReference>
<dbReference type="EMBL" id="AK226242">
    <property type="protein sequence ID" value="BAE98405.1"/>
    <property type="molecule type" value="mRNA"/>
</dbReference>
<dbReference type="PIR" id="T48283">
    <property type="entry name" value="T48283"/>
</dbReference>
<dbReference type="SMR" id="Q6AWW5"/>
<dbReference type="BioGRID" id="17131">
    <property type="interactions" value="32"/>
</dbReference>
<dbReference type="FunCoup" id="Q6AWW5">
    <property type="interactions" value="1"/>
</dbReference>
<dbReference type="IntAct" id="Q6AWW5">
    <property type="interactions" value="32"/>
</dbReference>
<dbReference type="STRING" id="3702.Q6AWW5"/>
<dbReference type="iPTMnet" id="Q6AWW5"/>
<dbReference type="PaxDb" id="3702-AT5G02620.1"/>
<dbReference type="ProteomicsDB" id="243135"/>
<dbReference type="EnsemblPlants" id="AT5G02620.1">
    <property type="protein sequence ID" value="AT5G02620.1"/>
    <property type="gene ID" value="AT5G02620"/>
</dbReference>
<dbReference type="EnsemblPlants" id="AT5G02620.3">
    <property type="protein sequence ID" value="AT5G02620.3"/>
    <property type="gene ID" value="AT5G02620"/>
</dbReference>
<dbReference type="EnsemblPlants" id="AT5G02620.4">
    <property type="protein sequence ID" value="AT5G02620.4"/>
    <property type="gene ID" value="AT5G02620"/>
</dbReference>
<dbReference type="GeneID" id="831855"/>
<dbReference type="Gramene" id="AT5G02620.1">
    <property type="protein sequence ID" value="AT5G02620.1"/>
    <property type="gene ID" value="AT5G02620"/>
</dbReference>
<dbReference type="Gramene" id="AT5G02620.3">
    <property type="protein sequence ID" value="AT5G02620.3"/>
    <property type="gene ID" value="AT5G02620"/>
</dbReference>
<dbReference type="Gramene" id="AT5G02620.4">
    <property type="protein sequence ID" value="AT5G02620.4"/>
    <property type="gene ID" value="AT5G02620"/>
</dbReference>
<dbReference type="KEGG" id="ath:AT5G02620"/>
<dbReference type="Araport" id="AT5G02620"/>
<dbReference type="TAIR" id="AT5G02620">
    <property type="gene designation" value="ANK1"/>
</dbReference>
<dbReference type="eggNOG" id="KOG0504">
    <property type="taxonomic scope" value="Eukaryota"/>
</dbReference>
<dbReference type="HOGENOM" id="CLU_000134_49_0_1"/>
<dbReference type="InParanoid" id="Q6AWW5"/>
<dbReference type="OMA" id="ESGHTDM"/>
<dbReference type="PhylomeDB" id="Q6AWW5"/>
<dbReference type="PRO" id="PR:Q6AWW5"/>
<dbReference type="Proteomes" id="UP000006548">
    <property type="component" value="Chromosome 5"/>
</dbReference>
<dbReference type="ExpressionAtlas" id="Q6AWW5">
    <property type="expression patterns" value="baseline and differential"/>
</dbReference>
<dbReference type="GO" id="GO:0005783">
    <property type="term" value="C:endoplasmic reticulum"/>
    <property type="evidence" value="ECO:0000314"/>
    <property type="project" value="TAIR"/>
</dbReference>
<dbReference type="GO" id="GO:0005886">
    <property type="term" value="C:plasma membrane"/>
    <property type="evidence" value="ECO:0007005"/>
    <property type="project" value="TAIR"/>
</dbReference>
<dbReference type="FunFam" id="1.25.40.20:FF:000379">
    <property type="entry name" value="Ankyrin repeat-containing protein At5g02620"/>
    <property type="match status" value="1"/>
</dbReference>
<dbReference type="FunFam" id="1.25.40.20:FF:000404">
    <property type="entry name" value="Ankyrin repeat-containing protein At5g02620"/>
    <property type="match status" value="1"/>
</dbReference>
<dbReference type="Gene3D" id="1.25.40.20">
    <property type="entry name" value="Ankyrin repeat-containing domain"/>
    <property type="match status" value="2"/>
</dbReference>
<dbReference type="InterPro" id="IPR002110">
    <property type="entry name" value="Ankyrin_rpt"/>
</dbReference>
<dbReference type="InterPro" id="IPR036770">
    <property type="entry name" value="Ankyrin_rpt-contain_sf"/>
</dbReference>
<dbReference type="InterPro" id="IPR026961">
    <property type="entry name" value="PGG_dom"/>
</dbReference>
<dbReference type="PANTHER" id="PTHR24186:SF26">
    <property type="entry name" value="ANKYRIN REPEAT PLANT PROTEIN"/>
    <property type="match status" value="1"/>
</dbReference>
<dbReference type="PANTHER" id="PTHR24186">
    <property type="entry name" value="PROTEIN PHOSPHATASE 1 REGULATORY SUBUNIT"/>
    <property type="match status" value="1"/>
</dbReference>
<dbReference type="Pfam" id="PF00023">
    <property type="entry name" value="Ank"/>
    <property type="match status" value="1"/>
</dbReference>
<dbReference type="Pfam" id="PF12796">
    <property type="entry name" value="Ank_2"/>
    <property type="match status" value="3"/>
</dbReference>
<dbReference type="Pfam" id="PF13962">
    <property type="entry name" value="PGG"/>
    <property type="match status" value="1"/>
</dbReference>
<dbReference type="SMART" id="SM00248">
    <property type="entry name" value="ANK"/>
    <property type="match status" value="8"/>
</dbReference>
<dbReference type="SUPFAM" id="SSF48403">
    <property type="entry name" value="Ankyrin repeat"/>
    <property type="match status" value="1"/>
</dbReference>
<dbReference type="PROSITE" id="PS50297">
    <property type="entry name" value="ANK_REP_REGION"/>
    <property type="match status" value="1"/>
</dbReference>
<dbReference type="PROSITE" id="PS50088">
    <property type="entry name" value="ANK_REPEAT"/>
    <property type="match status" value="6"/>
</dbReference>
<gene>
    <name type="ordered locus">At5g02620</name>
    <name type="ORF">T22P11.210</name>
</gene>
<accession>Q6AWW5</accession>
<accession>Q0WWU3</accession>
<accession>Q9LZ40</accession>
<organism>
    <name type="scientific">Arabidopsis thaliana</name>
    <name type="common">Mouse-ear cress</name>
    <dbReference type="NCBI Taxonomy" id="3702"/>
    <lineage>
        <taxon>Eukaryota</taxon>
        <taxon>Viridiplantae</taxon>
        <taxon>Streptophyta</taxon>
        <taxon>Embryophyta</taxon>
        <taxon>Tracheophyta</taxon>
        <taxon>Spermatophyta</taxon>
        <taxon>Magnoliopsida</taxon>
        <taxon>eudicotyledons</taxon>
        <taxon>Gunneridae</taxon>
        <taxon>Pentapetalae</taxon>
        <taxon>rosids</taxon>
        <taxon>malvids</taxon>
        <taxon>Brassicales</taxon>
        <taxon>Brassicaceae</taxon>
        <taxon>Camelineae</taxon>
        <taxon>Arabidopsis</taxon>
    </lineage>
</organism>
<protein>
    <recommendedName>
        <fullName>Ankyrin repeat-containing protein At5g02620</fullName>
    </recommendedName>
</protein>
<proteinExistence type="evidence at protein level"/>
<keyword id="KW-0040">ANK repeat</keyword>
<keyword id="KW-0472">Membrane</keyword>
<keyword id="KW-0597">Phosphoprotein</keyword>
<keyword id="KW-1185">Reference proteome</keyword>
<keyword id="KW-0677">Repeat</keyword>
<keyword id="KW-0812">Transmembrane</keyword>
<keyword id="KW-1133">Transmembrane helix</keyword>
<comment type="subcellular location">
    <subcellularLocation>
        <location evidence="2">Membrane</location>
        <topology evidence="2">Multi-pass membrane protein</topology>
    </subcellularLocation>
</comment>
<comment type="sequence caution" evidence="2">
    <conflict type="erroneous initiation">
        <sequence resource="EMBL-CDS" id="CAB85999"/>
    </conflict>
</comment>
<feature type="chain" id="PRO_0000312031" description="Ankyrin repeat-containing protein At5g02620">
    <location>
        <begin position="1"/>
        <end position="524"/>
    </location>
</feature>
<feature type="transmembrane region" description="Helical" evidence="1">
    <location>
        <begin position="349"/>
        <end position="369"/>
    </location>
</feature>
<feature type="transmembrane region" description="Helical" evidence="1">
    <location>
        <begin position="399"/>
        <end position="419"/>
    </location>
</feature>
<feature type="transmembrane region" description="Helical" evidence="1">
    <location>
        <begin position="441"/>
        <end position="461"/>
    </location>
</feature>
<feature type="transmembrane region" description="Helical" evidence="1">
    <location>
        <begin position="472"/>
        <end position="492"/>
    </location>
</feature>
<feature type="repeat" description="ANK 1">
    <location>
        <begin position="16"/>
        <end position="45"/>
    </location>
</feature>
<feature type="repeat" description="ANK 2">
    <location>
        <begin position="55"/>
        <end position="84"/>
    </location>
</feature>
<feature type="repeat" description="ANK 3">
    <location>
        <begin position="90"/>
        <end position="119"/>
    </location>
</feature>
<feature type="repeat" description="ANK 4">
    <location>
        <begin position="124"/>
        <end position="153"/>
    </location>
</feature>
<feature type="repeat" description="ANK 5">
    <location>
        <begin position="158"/>
        <end position="187"/>
    </location>
</feature>
<feature type="repeat" description="ANK 6">
    <location>
        <begin position="192"/>
        <end position="222"/>
    </location>
</feature>
<feature type="repeat" description="ANK 7">
    <location>
        <begin position="226"/>
        <end position="255"/>
    </location>
</feature>
<feature type="repeat" description="ANK 8">
    <location>
        <begin position="260"/>
        <end position="289"/>
    </location>
</feature>
<feature type="modified residue" description="Phosphoserine" evidence="3 4">
    <location>
        <position position="508"/>
    </location>
</feature>
<feature type="sequence conflict" description="In Ref. 4; BAE98405." evidence="2" ref="4">
    <original>V</original>
    <variation>D</variation>
    <location>
        <position position="417"/>
    </location>
</feature>
<name>Y5262_ARATH</name>
<sequence>MKEIKKTMTKQMTARRDDTPLHTAVREGKTDLLLEMIGEHDGVELKELLAEQNQSGETALYVAAEYGYTDMVKILMKHSDSVLAGTKAKNGFDAFHIAAKNGNLQVLDVLIEANPELSFTFDSSKTTALHTAASQGHGEIVCFLLDKGVDLAAIARSNGKTALHSAARNGHTVIVKKLIEKKAGMVTRVDKKGQTALHMAVKGQNTEIVDVLMEADGSLINSADNKGNTPLHIAVRKNRAEIVQTVLKYCEVSRVAVNKSGETALDIAEKTGLHEIVPLLQKIGMQNARSIKPAEKVEPSGSSRKLKETVSEIGHEVHTQLEQTGRTRREIQGIAKRVNKMHTEGLNNAINSTTLVAILIATVAFAAIFNVPGQYTDDPKDVPPGYSLGEARAAPRPEFLIFVVFDSFALFISLAVVVVQTSVVVIERRAKKQMMAIINKLMWMACIMISVAFVSLSFVVVGEKEKPLAVGVTAIGALIMVSTLGTMCYWVIANRIEGSKSSPASMMSDPELADSKHNRKLYAV</sequence>
<reference key="1">
    <citation type="journal article" date="2000" name="Nature">
        <title>Sequence and analysis of chromosome 5 of the plant Arabidopsis thaliana.</title>
        <authorList>
            <person name="Tabata S."/>
            <person name="Kaneko T."/>
            <person name="Nakamura Y."/>
            <person name="Kotani H."/>
            <person name="Kato T."/>
            <person name="Asamizu E."/>
            <person name="Miyajima N."/>
            <person name="Sasamoto S."/>
            <person name="Kimura T."/>
            <person name="Hosouchi T."/>
            <person name="Kawashima K."/>
            <person name="Kohara M."/>
            <person name="Matsumoto M."/>
            <person name="Matsuno A."/>
            <person name="Muraki A."/>
            <person name="Nakayama S."/>
            <person name="Nakazaki N."/>
            <person name="Naruo K."/>
            <person name="Okumura S."/>
            <person name="Shinpo S."/>
            <person name="Takeuchi C."/>
            <person name="Wada T."/>
            <person name="Watanabe A."/>
            <person name="Yamada M."/>
            <person name="Yasuda M."/>
            <person name="Sato S."/>
            <person name="de la Bastide M."/>
            <person name="Huang E."/>
            <person name="Spiegel L."/>
            <person name="Gnoj L."/>
            <person name="O'Shaughnessy A."/>
            <person name="Preston R."/>
            <person name="Habermann K."/>
            <person name="Murray J."/>
            <person name="Johnson D."/>
            <person name="Rohlfing T."/>
            <person name="Nelson J."/>
            <person name="Stoneking T."/>
            <person name="Pepin K."/>
            <person name="Spieth J."/>
            <person name="Sekhon M."/>
            <person name="Armstrong J."/>
            <person name="Becker M."/>
            <person name="Belter E."/>
            <person name="Cordum H."/>
            <person name="Cordes M."/>
            <person name="Courtney L."/>
            <person name="Courtney W."/>
            <person name="Dante M."/>
            <person name="Du H."/>
            <person name="Edwards J."/>
            <person name="Fryman J."/>
            <person name="Haakensen B."/>
            <person name="Lamar E."/>
            <person name="Latreille P."/>
            <person name="Leonard S."/>
            <person name="Meyer R."/>
            <person name="Mulvaney E."/>
            <person name="Ozersky P."/>
            <person name="Riley A."/>
            <person name="Strowmatt C."/>
            <person name="Wagner-McPherson C."/>
            <person name="Wollam A."/>
            <person name="Yoakum M."/>
            <person name="Bell M."/>
            <person name="Dedhia N."/>
            <person name="Parnell L."/>
            <person name="Shah R."/>
            <person name="Rodriguez M."/>
            <person name="Hoon See L."/>
            <person name="Vil D."/>
            <person name="Baker J."/>
            <person name="Kirchoff K."/>
            <person name="Toth K."/>
            <person name="King L."/>
            <person name="Bahret A."/>
            <person name="Miller B."/>
            <person name="Marra M.A."/>
            <person name="Martienssen R."/>
            <person name="McCombie W.R."/>
            <person name="Wilson R.K."/>
            <person name="Murphy G."/>
            <person name="Bancroft I."/>
            <person name="Volckaert G."/>
            <person name="Wambutt R."/>
            <person name="Duesterhoeft A."/>
            <person name="Stiekema W."/>
            <person name="Pohl T."/>
            <person name="Entian K.-D."/>
            <person name="Terryn N."/>
            <person name="Hartley N."/>
            <person name="Bent E."/>
            <person name="Johnson S."/>
            <person name="Langham S.-A."/>
            <person name="McCullagh B."/>
            <person name="Robben J."/>
            <person name="Grymonprez B."/>
            <person name="Zimmermann W."/>
            <person name="Ramsperger U."/>
            <person name="Wedler H."/>
            <person name="Balke K."/>
            <person name="Wedler E."/>
            <person name="Peters S."/>
            <person name="van Staveren M."/>
            <person name="Dirkse W."/>
            <person name="Mooijman P."/>
            <person name="Klein Lankhorst R."/>
            <person name="Weitzenegger T."/>
            <person name="Bothe G."/>
            <person name="Rose M."/>
            <person name="Hauf J."/>
            <person name="Berneiser S."/>
            <person name="Hempel S."/>
            <person name="Feldpausch M."/>
            <person name="Lamberth S."/>
            <person name="Villarroel R."/>
            <person name="Gielen J."/>
            <person name="Ardiles W."/>
            <person name="Bents O."/>
            <person name="Lemcke K."/>
            <person name="Kolesov G."/>
            <person name="Mayer K.F.X."/>
            <person name="Rudd S."/>
            <person name="Schoof H."/>
            <person name="Schueller C."/>
            <person name="Zaccaria P."/>
            <person name="Mewes H.-W."/>
            <person name="Bevan M."/>
            <person name="Fransz P.F."/>
        </authorList>
    </citation>
    <scope>NUCLEOTIDE SEQUENCE [LARGE SCALE GENOMIC DNA]</scope>
    <source>
        <strain>cv. Columbia</strain>
    </source>
</reference>
<reference key="2">
    <citation type="journal article" date="2017" name="Plant J.">
        <title>Araport11: a complete reannotation of the Arabidopsis thaliana reference genome.</title>
        <authorList>
            <person name="Cheng C.Y."/>
            <person name="Krishnakumar V."/>
            <person name="Chan A.P."/>
            <person name="Thibaud-Nissen F."/>
            <person name="Schobel S."/>
            <person name="Town C.D."/>
        </authorList>
    </citation>
    <scope>GENOME REANNOTATION</scope>
    <source>
        <strain>cv. Columbia</strain>
    </source>
</reference>
<reference key="3">
    <citation type="submission" date="2004-11" db="EMBL/GenBank/DDBJ databases">
        <title>Arabidopsis ORF clones.</title>
        <authorList>
            <person name="Shinn P."/>
            <person name="Chen H."/>
            <person name="Cheuk R.F."/>
            <person name="Kim C.J."/>
            <person name="Ecker J.R."/>
        </authorList>
    </citation>
    <scope>NUCLEOTIDE SEQUENCE [LARGE SCALE MRNA]</scope>
</reference>
<reference key="4">
    <citation type="submission" date="2006-07" db="EMBL/GenBank/DDBJ databases">
        <title>Large-scale analysis of RIKEN Arabidopsis full-length (RAFL) cDNAs.</title>
        <authorList>
            <person name="Totoki Y."/>
            <person name="Seki M."/>
            <person name="Ishida J."/>
            <person name="Nakajima M."/>
            <person name="Enju A."/>
            <person name="Kamiya A."/>
            <person name="Narusaka M."/>
            <person name="Shin-i T."/>
            <person name="Nakagawa M."/>
            <person name="Sakamoto N."/>
            <person name="Oishi K."/>
            <person name="Kohara Y."/>
            <person name="Kobayashi M."/>
            <person name="Toyoda A."/>
            <person name="Sakaki Y."/>
            <person name="Sakurai T."/>
            <person name="Iida K."/>
            <person name="Akiyama K."/>
            <person name="Satou M."/>
            <person name="Toyoda T."/>
            <person name="Konagaya A."/>
            <person name="Carninci P."/>
            <person name="Kawai J."/>
            <person name="Hayashizaki Y."/>
            <person name="Shinozaki K."/>
        </authorList>
    </citation>
    <scope>NUCLEOTIDE SEQUENCE [LARGE SCALE MRNA]</scope>
    <source>
        <strain>cv. Columbia</strain>
    </source>
</reference>
<reference key="5">
    <citation type="journal article" date="2003" name="Mol. Cell. Proteomics">
        <title>Large-scale analysis of in vivo phosphorylated membrane proteins by immobilized metal ion affinity chromatography and mass spectrometry.</title>
        <authorList>
            <person name="Nuehse T.S."/>
            <person name="Stensballe A."/>
            <person name="Jensen O.N."/>
            <person name="Peck S.C."/>
        </authorList>
    </citation>
    <scope>PHOSPHORYLATION [LARGE SCALE ANALYSIS] AT SER-508</scope>
    <scope>IDENTIFICATION BY MASS SPECTROMETRY [LARGE SCALE ANALYSIS]</scope>
    <source>
        <strain>cv. La-0</strain>
    </source>
</reference>
<reference key="6">
    <citation type="journal article" date="2004" name="Plant Cell">
        <title>Phosphoproteomics of the Arabidopsis plasma membrane and a new phosphorylation site database.</title>
        <authorList>
            <person name="Nuehse T.S."/>
            <person name="Stensballe A."/>
            <person name="Jensen O.N."/>
            <person name="Peck S.C."/>
        </authorList>
    </citation>
    <scope>PHOSPHORYLATION [LARGE SCALE ANALYSIS] AT SER-508</scope>
    <scope>IDENTIFICATION BY MASS SPECTROMETRY [LARGE SCALE ANALYSIS]</scope>
</reference>